<reference key="1">
    <citation type="submission" date="1992-11" db="EMBL/GenBank/DDBJ databases">
        <title>Genetics and phoB regulation of phosphonate utilization in Rhizobium meliloti 1021.</title>
        <authorList>
            <person name="McLean P.A."/>
            <person name="Liu C.M."/>
            <person name="Sookdeo C.C."/>
            <person name="Cannon F.C."/>
        </authorList>
    </citation>
    <scope>NUCLEOTIDE SEQUENCE [GENOMIC DNA]</scope>
    <source>
        <strain>1021</strain>
    </source>
</reference>
<reference key="2">
    <citation type="journal article" date="2001" name="Proc. Natl. Acad. Sci. U.S.A.">
        <title>Analysis of the chromosome sequence of the legume symbiont Sinorhizobium meliloti strain 1021.</title>
        <authorList>
            <person name="Capela D."/>
            <person name="Barloy-Hubler F."/>
            <person name="Gouzy J."/>
            <person name="Bothe G."/>
            <person name="Ampe F."/>
            <person name="Batut J."/>
            <person name="Boistard P."/>
            <person name="Becker A."/>
            <person name="Boutry M."/>
            <person name="Cadieu E."/>
            <person name="Dreano S."/>
            <person name="Gloux S."/>
            <person name="Godrie T."/>
            <person name="Goffeau A."/>
            <person name="Kahn D."/>
            <person name="Kiss E."/>
            <person name="Lelaure V."/>
            <person name="Masuy D."/>
            <person name="Pohl T."/>
            <person name="Portetelle D."/>
            <person name="Puehler A."/>
            <person name="Purnelle B."/>
            <person name="Ramsperger U."/>
            <person name="Renard C."/>
            <person name="Thebault P."/>
            <person name="Vandenbol M."/>
            <person name="Weidner S."/>
            <person name="Galibert F."/>
        </authorList>
    </citation>
    <scope>NUCLEOTIDE SEQUENCE [LARGE SCALE GENOMIC DNA]</scope>
    <source>
        <strain>1021</strain>
    </source>
</reference>
<reference key="3">
    <citation type="journal article" date="2001" name="Science">
        <title>The composite genome of the legume symbiont Sinorhizobium meliloti.</title>
        <authorList>
            <person name="Galibert F."/>
            <person name="Finan T.M."/>
            <person name="Long S.R."/>
            <person name="Puehler A."/>
            <person name="Abola P."/>
            <person name="Ampe F."/>
            <person name="Barloy-Hubler F."/>
            <person name="Barnett M.J."/>
            <person name="Becker A."/>
            <person name="Boistard P."/>
            <person name="Bothe G."/>
            <person name="Boutry M."/>
            <person name="Bowser L."/>
            <person name="Buhrmester J."/>
            <person name="Cadieu E."/>
            <person name="Capela D."/>
            <person name="Chain P."/>
            <person name="Cowie A."/>
            <person name="Davis R.W."/>
            <person name="Dreano S."/>
            <person name="Federspiel N.A."/>
            <person name="Fisher R.F."/>
            <person name="Gloux S."/>
            <person name="Godrie T."/>
            <person name="Goffeau A."/>
            <person name="Golding B."/>
            <person name="Gouzy J."/>
            <person name="Gurjal M."/>
            <person name="Hernandez-Lucas I."/>
            <person name="Hong A."/>
            <person name="Huizar L."/>
            <person name="Hyman R.W."/>
            <person name="Jones T."/>
            <person name="Kahn D."/>
            <person name="Kahn M.L."/>
            <person name="Kalman S."/>
            <person name="Keating D.H."/>
            <person name="Kiss E."/>
            <person name="Komp C."/>
            <person name="Lelaure V."/>
            <person name="Masuy D."/>
            <person name="Palm C."/>
            <person name="Peck M.C."/>
            <person name="Pohl T.M."/>
            <person name="Portetelle D."/>
            <person name="Purnelle B."/>
            <person name="Ramsperger U."/>
            <person name="Surzycki R."/>
            <person name="Thebault P."/>
            <person name="Vandenbol M."/>
            <person name="Vorhoelter F.J."/>
            <person name="Weidner S."/>
            <person name="Wells D.H."/>
            <person name="Wong K."/>
            <person name="Yeh K.-C."/>
            <person name="Batut J."/>
        </authorList>
    </citation>
    <scope>NUCLEOTIDE SEQUENCE [LARGE SCALE GENOMIC DNA]</scope>
    <source>
        <strain>1021</strain>
    </source>
</reference>
<name>PHOB_RHIME</name>
<sequence>MLPKIAVVEDEEALSVLLRYNLEAEGFEVDTILRGDEAEIRLQERLPDLLILDWMLPGVSGIELCRRLRQRPETERLPIIMLTARGEESERVRGLATGADDYVVKPFSTPELMARVKAMLRRAKPEVLSTLLRCGDIELDRETHRVHRRSREVRLGPTEFRLLEFLMSSPGRVFSRSQLLDGVWGHDIYVDERTVDVHVGRLRKALNFSNMPDVIRTVRGAGYSLES</sequence>
<proteinExistence type="inferred from homology"/>
<organism>
    <name type="scientific">Rhizobium meliloti (strain 1021)</name>
    <name type="common">Ensifer meliloti</name>
    <name type="synonym">Sinorhizobium meliloti</name>
    <dbReference type="NCBI Taxonomy" id="266834"/>
    <lineage>
        <taxon>Bacteria</taxon>
        <taxon>Pseudomonadati</taxon>
        <taxon>Pseudomonadota</taxon>
        <taxon>Alphaproteobacteria</taxon>
        <taxon>Hyphomicrobiales</taxon>
        <taxon>Rhizobiaceae</taxon>
        <taxon>Sinorhizobium/Ensifer group</taxon>
        <taxon>Sinorhizobium</taxon>
    </lineage>
</organism>
<comment type="function">
    <text evidence="1">This protein is a positive regulator for the phosphate regulon. Transcription of this operon is positively regulated by PhoB and PhoR when phosphate is limited (By similarity).</text>
</comment>
<comment type="subcellular location">
    <subcellularLocation>
        <location>Cytoplasm</location>
    </subcellularLocation>
</comment>
<comment type="PTM">
    <text evidence="1">Phosphorylated by PhoR.</text>
</comment>
<gene>
    <name type="primary">phoB</name>
    <name type="ordered locus">R00515</name>
    <name type="ORF">SMc02140</name>
</gene>
<feature type="chain" id="PRO_0000081191" description="Phosphate regulon transcriptional regulatory protein PhoB">
    <location>
        <begin position="1"/>
        <end position="227"/>
    </location>
</feature>
<feature type="domain" description="Response regulatory" evidence="2">
    <location>
        <begin position="4"/>
        <end position="120"/>
    </location>
</feature>
<feature type="DNA-binding region" description="OmpR/PhoB-type" evidence="3">
    <location>
        <begin position="129"/>
        <end position="227"/>
    </location>
</feature>
<feature type="modified residue" description="4-aspartylphosphate" evidence="2">
    <location>
        <position position="53"/>
    </location>
</feature>
<dbReference type="EMBL" id="M96261">
    <property type="protein sequence ID" value="AAB42026.1"/>
    <property type="molecule type" value="Genomic_DNA"/>
</dbReference>
<dbReference type="EMBL" id="AL591688">
    <property type="protein sequence ID" value="CAC45087.1"/>
    <property type="molecule type" value="Genomic_DNA"/>
</dbReference>
<dbReference type="RefSeq" id="NP_384621.1">
    <property type="nucleotide sequence ID" value="NC_003047.1"/>
</dbReference>
<dbReference type="RefSeq" id="WP_003530178.1">
    <property type="nucleotide sequence ID" value="NC_003047.1"/>
</dbReference>
<dbReference type="SMR" id="Q52990"/>
<dbReference type="EnsemblBacteria" id="CAC45087">
    <property type="protein sequence ID" value="CAC45087"/>
    <property type="gene ID" value="SMc02140"/>
</dbReference>
<dbReference type="GeneID" id="89574834"/>
<dbReference type="KEGG" id="sme:SMc02140"/>
<dbReference type="PATRIC" id="fig|266834.11.peg.1888"/>
<dbReference type="eggNOG" id="COG0745">
    <property type="taxonomic scope" value="Bacteria"/>
</dbReference>
<dbReference type="HOGENOM" id="CLU_000445_30_4_5"/>
<dbReference type="OrthoDB" id="9802426at2"/>
<dbReference type="Proteomes" id="UP000001976">
    <property type="component" value="Chromosome"/>
</dbReference>
<dbReference type="GO" id="GO:0005829">
    <property type="term" value="C:cytosol"/>
    <property type="evidence" value="ECO:0007669"/>
    <property type="project" value="TreeGrafter"/>
</dbReference>
<dbReference type="GO" id="GO:0032993">
    <property type="term" value="C:protein-DNA complex"/>
    <property type="evidence" value="ECO:0007669"/>
    <property type="project" value="TreeGrafter"/>
</dbReference>
<dbReference type="GO" id="GO:0000156">
    <property type="term" value="F:phosphorelay response regulator activity"/>
    <property type="evidence" value="ECO:0007669"/>
    <property type="project" value="InterPro"/>
</dbReference>
<dbReference type="GO" id="GO:0000976">
    <property type="term" value="F:transcription cis-regulatory region binding"/>
    <property type="evidence" value="ECO:0007669"/>
    <property type="project" value="TreeGrafter"/>
</dbReference>
<dbReference type="GO" id="GO:0006817">
    <property type="term" value="P:phosphate ion transport"/>
    <property type="evidence" value="ECO:0007669"/>
    <property type="project" value="UniProtKB-KW"/>
</dbReference>
<dbReference type="GO" id="GO:0006355">
    <property type="term" value="P:regulation of DNA-templated transcription"/>
    <property type="evidence" value="ECO:0007669"/>
    <property type="project" value="InterPro"/>
</dbReference>
<dbReference type="CDD" id="cd00383">
    <property type="entry name" value="trans_reg_C"/>
    <property type="match status" value="1"/>
</dbReference>
<dbReference type="FunFam" id="3.40.50.2300:FF:000001">
    <property type="entry name" value="DNA-binding response regulator PhoB"/>
    <property type="match status" value="1"/>
</dbReference>
<dbReference type="FunFam" id="1.10.10.10:FF:000018">
    <property type="entry name" value="DNA-binding response regulator ResD"/>
    <property type="match status" value="1"/>
</dbReference>
<dbReference type="Gene3D" id="3.40.50.2300">
    <property type="match status" value="1"/>
</dbReference>
<dbReference type="Gene3D" id="6.10.250.690">
    <property type="match status" value="1"/>
</dbReference>
<dbReference type="Gene3D" id="1.10.10.10">
    <property type="entry name" value="Winged helix-like DNA-binding domain superfamily/Winged helix DNA-binding domain"/>
    <property type="match status" value="1"/>
</dbReference>
<dbReference type="InterPro" id="IPR011006">
    <property type="entry name" value="CheY-like_superfamily"/>
</dbReference>
<dbReference type="InterPro" id="IPR001867">
    <property type="entry name" value="OmpR/PhoB-type_DNA-bd"/>
</dbReference>
<dbReference type="InterPro" id="IPR016032">
    <property type="entry name" value="Sig_transdc_resp-reg_C-effctor"/>
</dbReference>
<dbReference type="InterPro" id="IPR011879">
    <property type="entry name" value="Sig_transdc_resp-reg_PhoB"/>
</dbReference>
<dbReference type="InterPro" id="IPR001789">
    <property type="entry name" value="Sig_transdc_resp-reg_receiver"/>
</dbReference>
<dbReference type="InterPro" id="IPR039420">
    <property type="entry name" value="WalR-like"/>
</dbReference>
<dbReference type="InterPro" id="IPR036388">
    <property type="entry name" value="WH-like_DNA-bd_sf"/>
</dbReference>
<dbReference type="NCBIfam" id="TIGR02154">
    <property type="entry name" value="PhoB"/>
    <property type="match status" value="1"/>
</dbReference>
<dbReference type="PANTHER" id="PTHR48111:SF40">
    <property type="entry name" value="PHOSPHATE REGULON TRANSCRIPTIONAL REGULATORY PROTEIN PHOB"/>
    <property type="match status" value="1"/>
</dbReference>
<dbReference type="PANTHER" id="PTHR48111">
    <property type="entry name" value="REGULATOR OF RPOS"/>
    <property type="match status" value="1"/>
</dbReference>
<dbReference type="Pfam" id="PF00072">
    <property type="entry name" value="Response_reg"/>
    <property type="match status" value="1"/>
</dbReference>
<dbReference type="Pfam" id="PF00486">
    <property type="entry name" value="Trans_reg_C"/>
    <property type="match status" value="1"/>
</dbReference>
<dbReference type="SMART" id="SM00448">
    <property type="entry name" value="REC"/>
    <property type="match status" value="1"/>
</dbReference>
<dbReference type="SMART" id="SM00862">
    <property type="entry name" value="Trans_reg_C"/>
    <property type="match status" value="1"/>
</dbReference>
<dbReference type="SUPFAM" id="SSF46894">
    <property type="entry name" value="C-terminal effector domain of the bipartite response regulators"/>
    <property type="match status" value="1"/>
</dbReference>
<dbReference type="SUPFAM" id="SSF52172">
    <property type="entry name" value="CheY-like"/>
    <property type="match status" value="1"/>
</dbReference>
<dbReference type="PROSITE" id="PS51755">
    <property type="entry name" value="OMPR_PHOB"/>
    <property type="match status" value="1"/>
</dbReference>
<dbReference type="PROSITE" id="PS50110">
    <property type="entry name" value="RESPONSE_REGULATORY"/>
    <property type="match status" value="1"/>
</dbReference>
<accession>Q52990</accession>
<evidence type="ECO:0000250" key="1"/>
<evidence type="ECO:0000255" key="2">
    <source>
        <dbReference type="PROSITE-ProRule" id="PRU00169"/>
    </source>
</evidence>
<evidence type="ECO:0000255" key="3">
    <source>
        <dbReference type="PROSITE-ProRule" id="PRU01091"/>
    </source>
</evidence>
<keyword id="KW-0010">Activator</keyword>
<keyword id="KW-0963">Cytoplasm</keyword>
<keyword id="KW-0238">DNA-binding</keyword>
<keyword id="KW-0592">Phosphate transport</keyword>
<keyword id="KW-0597">Phosphoprotein</keyword>
<keyword id="KW-1185">Reference proteome</keyword>
<keyword id="KW-0804">Transcription</keyword>
<keyword id="KW-0805">Transcription regulation</keyword>
<keyword id="KW-0813">Transport</keyword>
<keyword id="KW-0902">Two-component regulatory system</keyword>
<protein>
    <recommendedName>
        <fullName>Phosphate regulon transcriptional regulatory protein PhoB</fullName>
    </recommendedName>
</protein>